<accession>A4QJL9</accession>
<name>PSAJ_AETGR</name>
<geneLocation type="chloroplast"/>
<proteinExistence type="inferred from homology"/>
<feature type="chain" id="PRO_0000354126" description="Photosystem I reaction center subunit IX">
    <location>
        <begin position="1"/>
        <end position="43"/>
    </location>
</feature>
<feature type="transmembrane region" description="Helical" evidence="1">
    <location>
        <begin position="7"/>
        <end position="27"/>
    </location>
</feature>
<evidence type="ECO:0000255" key="1">
    <source>
        <dbReference type="HAMAP-Rule" id="MF_00522"/>
    </source>
</evidence>
<dbReference type="EMBL" id="AP009367">
    <property type="protein sequence ID" value="BAF49874.1"/>
    <property type="molecule type" value="Genomic_DNA"/>
</dbReference>
<dbReference type="RefSeq" id="YP_001123050.1">
    <property type="nucleotide sequence ID" value="NC_009266.1"/>
</dbReference>
<dbReference type="SMR" id="A4QJL9"/>
<dbReference type="GeneID" id="4962346"/>
<dbReference type="GO" id="GO:0009535">
    <property type="term" value="C:chloroplast thylakoid membrane"/>
    <property type="evidence" value="ECO:0007669"/>
    <property type="project" value="UniProtKB-SubCell"/>
</dbReference>
<dbReference type="GO" id="GO:0009522">
    <property type="term" value="C:photosystem I"/>
    <property type="evidence" value="ECO:0007669"/>
    <property type="project" value="UniProtKB-KW"/>
</dbReference>
<dbReference type="GO" id="GO:0015979">
    <property type="term" value="P:photosynthesis"/>
    <property type="evidence" value="ECO:0007669"/>
    <property type="project" value="UniProtKB-UniRule"/>
</dbReference>
<dbReference type="FunFam" id="1.20.5.510:FF:000001">
    <property type="entry name" value="Photosystem I reaction center subunit IX"/>
    <property type="match status" value="1"/>
</dbReference>
<dbReference type="Gene3D" id="1.20.5.510">
    <property type="entry name" value="Single helix bin"/>
    <property type="match status" value="1"/>
</dbReference>
<dbReference type="HAMAP" id="MF_00522">
    <property type="entry name" value="PSI_PsaJ"/>
    <property type="match status" value="1"/>
</dbReference>
<dbReference type="InterPro" id="IPR002615">
    <property type="entry name" value="PSI_PsaJ"/>
</dbReference>
<dbReference type="InterPro" id="IPR036062">
    <property type="entry name" value="PSI_PsaJ_sf"/>
</dbReference>
<dbReference type="PANTHER" id="PTHR36082">
    <property type="match status" value="1"/>
</dbReference>
<dbReference type="PANTHER" id="PTHR36082:SF2">
    <property type="entry name" value="PHOTOSYSTEM I REACTION CENTER SUBUNIT IX"/>
    <property type="match status" value="1"/>
</dbReference>
<dbReference type="Pfam" id="PF01701">
    <property type="entry name" value="PSI_PsaJ"/>
    <property type="match status" value="1"/>
</dbReference>
<dbReference type="SUPFAM" id="SSF81544">
    <property type="entry name" value="Subunit IX of photosystem I reaction centre, PsaJ"/>
    <property type="match status" value="1"/>
</dbReference>
<reference key="1">
    <citation type="submission" date="2007-03" db="EMBL/GenBank/DDBJ databases">
        <title>Sequencing analysis of Aethionema grandiflorum chloroplast DNA.</title>
        <authorList>
            <person name="Hosouchi T."/>
            <person name="Tsuruoka H."/>
            <person name="Kotani H."/>
        </authorList>
    </citation>
    <scope>NUCLEOTIDE SEQUENCE [LARGE SCALE GENOMIC DNA]</scope>
</reference>
<gene>
    <name evidence="1" type="primary">psaJ</name>
</gene>
<comment type="function">
    <text evidence="1">May help in the organization of the PsaE and PsaF subunits.</text>
</comment>
<comment type="subcellular location">
    <subcellularLocation>
        <location evidence="1">Plastid</location>
        <location evidence="1">Chloroplast thylakoid membrane</location>
        <topology evidence="1">Single-pass membrane protein</topology>
    </subcellularLocation>
</comment>
<comment type="similarity">
    <text evidence="1">Belongs to the PsaJ family.</text>
</comment>
<protein>
    <recommendedName>
        <fullName evidence="1">Photosystem I reaction center subunit IX</fullName>
    </recommendedName>
    <alternativeName>
        <fullName evidence="1">PSI-J</fullName>
    </alternativeName>
</protein>
<keyword id="KW-0150">Chloroplast</keyword>
<keyword id="KW-0472">Membrane</keyword>
<keyword id="KW-0602">Photosynthesis</keyword>
<keyword id="KW-0603">Photosystem I</keyword>
<keyword id="KW-0934">Plastid</keyword>
<keyword id="KW-0793">Thylakoid</keyword>
<keyword id="KW-0812">Transmembrane</keyword>
<keyword id="KW-1133">Transmembrane helix</keyword>
<sequence>MRDLKTYLSVAPVLSTLWFGSLAGLLIEINRLFPDGLTFPSSY</sequence>
<organism>
    <name type="scientific">Aethionema grandiflorum</name>
    <name type="common">Persian stone-cress</name>
    <dbReference type="NCBI Taxonomy" id="72657"/>
    <lineage>
        <taxon>Eukaryota</taxon>
        <taxon>Viridiplantae</taxon>
        <taxon>Streptophyta</taxon>
        <taxon>Embryophyta</taxon>
        <taxon>Tracheophyta</taxon>
        <taxon>Spermatophyta</taxon>
        <taxon>Magnoliopsida</taxon>
        <taxon>eudicotyledons</taxon>
        <taxon>Gunneridae</taxon>
        <taxon>Pentapetalae</taxon>
        <taxon>rosids</taxon>
        <taxon>malvids</taxon>
        <taxon>Brassicales</taxon>
        <taxon>Brassicaceae</taxon>
        <taxon>Aethionemeae</taxon>
        <taxon>Aethionema</taxon>
    </lineage>
</organism>